<dbReference type="EC" id="2.5.1.78" evidence="1"/>
<dbReference type="EMBL" id="CP000050">
    <property type="protein sequence ID" value="AAY50580.1"/>
    <property type="molecule type" value="Genomic_DNA"/>
</dbReference>
<dbReference type="RefSeq" id="WP_011035936.1">
    <property type="nucleotide sequence ID" value="NZ_CP155948.1"/>
</dbReference>
<dbReference type="SMR" id="Q4UQU3"/>
<dbReference type="GeneID" id="58014738"/>
<dbReference type="KEGG" id="xcb:XC_3537"/>
<dbReference type="HOGENOM" id="CLU_089358_1_2_6"/>
<dbReference type="UniPathway" id="UPA00275">
    <property type="reaction ID" value="UER00404"/>
</dbReference>
<dbReference type="Proteomes" id="UP000000420">
    <property type="component" value="Chromosome"/>
</dbReference>
<dbReference type="GO" id="GO:0005829">
    <property type="term" value="C:cytosol"/>
    <property type="evidence" value="ECO:0007669"/>
    <property type="project" value="TreeGrafter"/>
</dbReference>
<dbReference type="GO" id="GO:0009349">
    <property type="term" value="C:riboflavin synthase complex"/>
    <property type="evidence" value="ECO:0007669"/>
    <property type="project" value="InterPro"/>
</dbReference>
<dbReference type="GO" id="GO:0000906">
    <property type="term" value="F:6,7-dimethyl-8-ribityllumazine synthase activity"/>
    <property type="evidence" value="ECO:0007669"/>
    <property type="project" value="UniProtKB-UniRule"/>
</dbReference>
<dbReference type="GO" id="GO:0009231">
    <property type="term" value="P:riboflavin biosynthetic process"/>
    <property type="evidence" value="ECO:0007669"/>
    <property type="project" value="UniProtKB-UniRule"/>
</dbReference>
<dbReference type="CDD" id="cd09209">
    <property type="entry name" value="Lumazine_synthase-I"/>
    <property type="match status" value="1"/>
</dbReference>
<dbReference type="Gene3D" id="3.40.50.960">
    <property type="entry name" value="Lumazine/riboflavin synthase"/>
    <property type="match status" value="1"/>
</dbReference>
<dbReference type="HAMAP" id="MF_00178">
    <property type="entry name" value="Lumazine_synth"/>
    <property type="match status" value="1"/>
</dbReference>
<dbReference type="InterPro" id="IPR034964">
    <property type="entry name" value="LS"/>
</dbReference>
<dbReference type="InterPro" id="IPR002180">
    <property type="entry name" value="LS/RS"/>
</dbReference>
<dbReference type="InterPro" id="IPR036467">
    <property type="entry name" value="LS/RS_sf"/>
</dbReference>
<dbReference type="NCBIfam" id="TIGR00114">
    <property type="entry name" value="lumazine-synth"/>
    <property type="match status" value="1"/>
</dbReference>
<dbReference type="PANTHER" id="PTHR21058:SF0">
    <property type="entry name" value="6,7-DIMETHYL-8-RIBITYLLUMAZINE SYNTHASE"/>
    <property type="match status" value="1"/>
</dbReference>
<dbReference type="PANTHER" id="PTHR21058">
    <property type="entry name" value="6,7-DIMETHYL-8-RIBITYLLUMAZINE SYNTHASE DMRL SYNTHASE LUMAZINE SYNTHASE"/>
    <property type="match status" value="1"/>
</dbReference>
<dbReference type="Pfam" id="PF00885">
    <property type="entry name" value="DMRL_synthase"/>
    <property type="match status" value="1"/>
</dbReference>
<dbReference type="SUPFAM" id="SSF52121">
    <property type="entry name" value="Lumazine synthase"/>
    <property type="match status" value="1"/>
</dbReference>
<name>RISB_XANC8</name>
<protein>
    <recommendedName>
        <fullName evidence="1">6,7-dimethyl-8-ribityllumazine synthase</fullName>
        <shortName evidence="1">DMRL synthase</shortName>
        <shortName evidence="1">LS</shortName>
        <shortName evidence="1">Lumazine synthase</shortName>
        <ecNumber evidence="1">2.5.1.78</ecNumber>
    </recommendedName>
</protein>
<comment type="function">
    <text evidence="1">Catalyzes the formation of 6,7-dimethyl-8-ribityllumazine by condensation of 5-amino-6-(D-ribitylamino)uracil with 3,4-dihydroxy-2-butanone 4-phosphate. This is the penultimate step in the biosynthesis of riboflavin.</text>
</comment>
<comment type="catalytic activity">
    <reaction evidence="1">
        <text>(2S)-2-hydroxy-3-oxobutyl phosphate + 5-amino-6-(D-ribitylamino)uracil = 6,7-dimethyl-8-(1-D-ribityl)lumazine + phosphate + 2 H2O + H(+)</text>
        <dbReference type="Rhea" id="RHEA:26152"/>
        <dbReference type="ChEBI" id="CHEBI:15377"/>
        <dbReference type="ChEBI" id="CHEBI:15378"/>
        <dbReference type="ChEBI" id="CHEBI:15934"/>
        <dbReference type="ChEBI" id="CHEBI:43474"/>
        <dbReference type="ChEBI" id="CHEBI:58201"/>
        <dbReference type="ChEBI" id="CHEBI:58830"/>
        <dbReference type="EC" id="2.5.1.78"/>
    </reaction>
</comment>
<comment type="pathway">
    <text evidence="1">Cofactor biosynthesis; riboflavin biosynthesis; riboflavin from 2-hydroxy-3-oxobutyl phosphate and 5-amino-6-(D-ribitylamino)uracil: step 1/2.</text>
</comment>
<comment type="subunit">
    <text evidence="1">Forms an icosahedral capsid composed of 60 subunits, arranged as a dodecamer of pentamers.</text>
</comment>
<comment type="similarity">
    <text evidence="1">Belongs to the DMRL synthase family.</text>
</comment>
<organism>
    <name type="scientific">Xanthomonas campestris pv. campestris (strain 8004)</name>
    <dbReference type="NCBI Taxonomy" id="314565"/>
    <lineage>
        <taxon>Bacteria</taxon>
        <taxon>Pseudomonadati</taxon>
        <taxon>Pseudomonadota</taxon>
        <taxon>Gammaproteobacteria</taxon>
        <taxon>Lysobacterales</taxon>
        <taxon>Lysobacteraceae</taxon>
        <taxon>Xanthomonas</taxon>
    </lineage>
</organism>
<feature type="chain" id="PRO_1000040549" description="6,7-dimethyl-8-ribityllumazine synthase">
    <location>
        <begin position="1"/>
        <end position="154"/>
    </location>
</feature>
<feature type="active site" description="Proton donor" evidence="1">
    <location>
        <position position="88"/>
    </location>
</feature>
<feature type="binding site" evidence="1">
    <location>
        <position position="22"/>
    </location>
    <ligand>
        <name>5-amino-6-(D-ribitylamino)uracil</name>
        <dbReference type="ChEBI" id="CHEBI:15934"/>
    </ligand>
</feature>
<feature type="binding site" evidence="1">
    <location>
        <begin position="56"/>
        <end position="58"/>
    </location>
    <ligand>
        <name>5-amino-6-(D-ribitylamino)uracil</name>
        <dbReference type="ChEBI" id="CHEBI:15934"/>
    </ligand>
</feature>
<feature type="binding site" evidence="1">
    <location>
        <begin position="80"/>
        <end position="82"/>
    </location>
    <ligand>
        <name>5-amino-6-(D-ribitylamino)uracil</name>
        <dbReference type="ChEBI" id="CHEBI:15934"/>
    </ligand>
</feature>
<feature type="binding site" evidence="1">
    <location>
        <begin position="85"/>
        <end position="86"/>
    </location>
    <ligand>
        <name>(2S)-2-hydroxy-3-oxobutyl phosphate</name>
        <dbReference type="ChEBI" id="CHEBI:58830"/>
    </ligand>
</feature>
<feature type="binding site" evidence="1">
    <location>
        <position position="113"/>
    </location>
    <ligand>
        <name>5-amino-6-(D-ribitylamino)uracil</name>
        <dbReference type="ChEBI" id="CHEBI:15934"/>
    </ligand>
</feature>
<feature type="binding site" evidence="1">
    <location>
        <position position="127"/>
    </location>
    <ligand>
        <name>(2S)-2-hydroxy-3-oxobutyl phosphate</name>
        <dbReference type="ChEBI" id="CHEBI:58830"/>
    </ligand>
</feature>
<sequence>MTHYEGDLRPTTARFVIIASRWNARITDALVTGARQSLAGNGIGEDAIDVVRVPGAWEIPMAANRVAQGGQHAAIIALGCVIRGDTRHYEHVADLCAEGLMSVQLQTGVPVLNGVLAVERVEDAEARAGGSHGNKGEECALAALELVNLMELLP</sequence>
<gene>
    <name evidence="1" type="primary">ribH</name>
    <name type="ordered locus">XC_3537</name>
</gene>
<keyword id="KW-0686">Riboflavin biosynthesis</keyword>
<keyword id="KW-0808">Transferase</keyword>
<reference key="1">
    <citation type="journal article" date="2005" name="Genome Res.">
        <title>Comparative and functional genomic analyses of the pathogenicity of phytopathogen Xanthomonas campestris pv. campestris.</title>
        <authorList>
            <person name="Qian W."/>
            <person name="Jia Y."/>
            <person name="Ren S.-X."/>
            <person name="He Y.-Q."/>
            <person name="Feng J.-X."/>
            <person name="Lu L.-F."/>
            <person name="Sun Q."/>
            <person name="Ying G."/>
            <person name="Tang D.-J."/>
            <person name="Tang H."/>
            <person name="Wu W."/>
            <person name="Hao P."/>
            <person name="Wang L."/>
            <person name="Jiang B.-L."/>
            <person name="Zeng S."/>
            <person name="Gu W.-Y."/>
            <person name="Lu G."/>
            <person name="Rong L."/>
            <person name="Tian Y."/>
            <person name="Yao Z."/>
            <person name="Fu G."/>
            <person name="Chen B."/>
            <person name="Fang R."/>
            <person name="Qiang B."/>
            <person name="Chen Z."/>
            <person name="Zhao G.-P."/>
            <person name="Tang J.-L."/>
            <person name="He C."/>
        </authorList>
    </citation>
    <scope>NUCLEOTIDE SEQUENCE [LARGE SCALE GENOMIC DNA]</scope>
    <source>
        <strain>8004</strain>
    </source>
</reference>
<accession>Q4UQU3</accession>
<evidence type="ECO:0000255" key="1">
    <source>
        <dbReference type="HAMAP-Rule" id="MF_00178"/>
    </source>
</evidence>
<proteinExistence type="inferred from homology"/>